<gene>
    <name type="ordered locus">SGR_1878</name>
</gene>
<feature type="chain" id="PRO_1000091267" description="UPF0102 protein SGR_1878">
    <location>
        <begin position="1"/>
        <end position="119"/>
    </location>
</feature>
<dbReference type="EMBL" id="AP009493">
    <property type="protein sequence ID" value="BAG18707.1"/>
    <property type="molecule type" value="Genomic_DNA"/>
</dbReference>
<dbReference type="RefSeq" id="WP_003965947.1">
    <property type="nucleotide sequence ID" value="NC_010572.1"/>
</dbReference>
<dbReference type="SMR" id="B1VYV2"/>
<dbReference type="KEGG" id="sgr:SGR_1878"/>
<dbReference type="eggNOG" id="COG0792">
    <property type="taxonomic scope" value="Bacteria"/>
</dbReference>
<dbReference type="HOGENOM" id="CLU_115353_2_3_11"/>
<dbReference type="Proteomes" id="UP000001685">
    <property type="component" value="Chromosome"/>
</dbReference>
<dbReference type="GO" id="GO:0003676">
    <property type="term" value="F:nucleic acid binding"/>
    <property type="evidence" value="ECO:0007669"/>
    <property type="project" value="InterPro"/>
</dbReference>
<dbReference type="CDD" id="cd20736">
    <property type="entry name" value="PoNe_Nuclease"/>
    <property type="match status" value="1"/>
</dbReference>
<dbReference type="Gene3D" id="3.40.1350.10">
    <property type="match status" value="1"/>
</dbReference>
<dbReference type="HAMAP" id="MF_00048">
    <property type="entry name" value="UPF0102"/>
    <property type="match status" value="1"/>
</dbReference>
<dbReference type="InterPro" id="IPR011335">
    <property type="entry name" value="Restrct_endonuc-II-like"/>
</dbReference>
<dbReference type="InterPro" id="IPR011856">
    <property type="entry name" value="tRNA_endonuc-like_dom_sf"/>
</dbReference>
<dbReference type="InterPro" id="IPR003509">
    <property type="entry name" value="UPF0102_YraN-like"/>
</dbReference>
<dbReference type="NCBIfam" id="NF009154">
    <property type="entry name" value="PRK12497.3-3"/>
    <property type="match status" value="1"/>
</dbReference>
<dbReference type="PANTHER" id="PTHR34039">
    <property type="entry name" value="UPF0102 PROTEIN YRAN"/>
    <property type="match status" value="1"/>
</dbReference>
<dbReference type="PANTHER" id="PTHR34039:SF1">
    <property type="entry name" value="UPF0102 PROTEIN YRAN"/>
    <property type="match status" value="1"/>
</dbReference>
<dbReference type="Pfam" id="PF02021">
    <property type="entry name" value="UPF0102"/>
    <property type="match status" value="1"/>
</dbReference>
<dbReference type="SUPFAM" id="SSF52980">
    <property type="entry name" value="Restriction endonuclease-like"/>
    <property type="match status" value="1"/>
</dbReference>
<evidence type="ECO:0000255" key="1">
    <source>
        <dbReference type="HAMAP-Rule" id="MF_00048"/>
    </source>
</evidence>
<accession>B1VYV2</accession>
<proteinExistence type="inferred from homology"/>
<comment type="similarity">
    <text evidence="1">Belongs to the UPF0102 family.</text>
</comment>
<organism>
    <name type="scientific">Streptomyces griseus subsp. griseus (strain JCM 4626 / CBS 651.72 / NBRC 13350 / KCC S-0626 / ISP 5235)</name>
    <dbReference type="NCBI Taxonomy" id="455632"/>
    <lineage>
        <taxon>Bacteria</taxon>
        <taxon>Bacillati</taxon>
        <taxon>Actinomycetota</taxon>
        <taxon>Actinomycetes</taxon>
        <taxon>Kitasatosporales</taxon>
        <taxon>Streptomycetaceae</taxon>
        <taxon>Streptomyces</taxon>
    </lineage>
</organism>
<protein>
    <recommendedName>
        <fullName evidence="1">UPF0102 protein SGR_1878</fullName>
    </recommendedName>
</protein>
<sequence>MNARGALGRYGEDLAARLLAEAGMAVIERNWRCRAGEIDIVARDGDALVFCEVKTRRSPGFEHPMAAVGPVKADRLRRLAEIWLDRHGGPPPGGVRIDLVGVLVPRRGAPVTEHARGVS</sequence>
<reference key="1">
    <citation type="journal article" date="2008" name="J. Bacteriol.">
        <title>Genome sequence of the streptomycin-producing microorganism Streptomyces griseus IFO 13350.</title>
        <authorList>
            <person name="Ohnishi Y."/>
            <person name="Ishikawa J."/>
            <person name="Hara H."/>
            <person name="Suzuki H."/>
            <person name="Ikenoya M."/>
            <person name="Ikeda H."/>
            <person name="Yamashita A."/>
            <person name="Hattori M."/>
            <person name="Horinouchi S."/>
        </authorList>
    </citation>
    <scope>NUCLEOTIDE SEQUENCE [LARGE SCALE GENOMIC DNA]</scope>
    <source>
        <strain>JCM 4626 / CBS 651.72 / NBRC 13350 / KCC S-0626 / ISP 5235</strain>
    </source>
</reference>
<name>Y1878_STRGG</name>